<gene>
    <name evidence="1" type="primary">cheD</name>
    <name type="ordered locus">CTC_01734</name>
</gene>
<proteinExistence type="inferred from homology"/>
<reference key="1">
    <citation type="journal article" date="2003" name="Proc. Natl. Acad. Sci. U.S.A.">
        <title>The genome sequence of Clostridium tetani, the causative agent of tetanus disease.</title>
        <authorList>
            <person name="Brueggemann H."/>
            <person name="Baeumer S."/>
            <person name="Fricke W.F."/>
            <person name="Wiezer A."/>
            <person name="Liesegang H."/>
            <person name="Decker I."/>
            <person name="Herzberg C."/>
            <person name="Martinez-Arias R."/>
            <person name="Merkl R."/>
            <person name="Henne A."/>
            <person name="Gottschalk G."/>
        </authorList>
    </citation>
    <scope>NUCLEOTIDE SEQUENCE [LARGE SCALE GENOMIC DNA]</scope>
    <source>
        <strain>Massachusetts / E88</strain>
    </source>
</reference>
<comment type="function">
    <text evidence="1">Probably deamidates glutamine residues to glutamate on methyl-accepting chemotaxis receptors (MCPs), playing an important role in chemotaxis.</text>
</comment>
<comment type="catalytic activity">
    <reaction evidence="1">
        <text>L-glutaminyl-[protein] + H2O = L-glutamyl-[protein] + NH4(+)</text>
        <dbReference type="Rhea" id="RHEA:16441"/>
        <dbReference type="Rhea" id="RHEA-COMP:10207"/>
        <dbReference type="Rhea" id="RHEA-COMP:10208"/>
        <dbReference type="ChEBI" id="CHEBI:15377"/>
        <dbReference type="ChEBI" id="CHEBI:28938"/>
        <dbReference type="ChEBI" id="CHEBI:29973"/>
        <dbReference type="ChEBI" id="CHEBI:30011"/>
        <dbReference type="EC" id="3.5.1.44"/>
    </reaction>
</comment>
<comment type="similarity">
    <text evidence="1">Belongs to the CheD family.</text>
</comment>
<keyword id="KW-0145">Chemotaxis</keyword>
<keyword id="KW-0378">Hydrolase</keyword>
<keyword id="KW-1185">Reference proteome</keyword>
<name>CHED_CLOTE</name>
<sequence>MHTMEVKEYRVGIADLNVAKSPDRIITVGLGSCIGIALYDRINGVGGLLHIMLPDSTQFKNVSNPLKFPDLGIIIMTDKMKEKGANIRNIKAKISGGASMFNFSDKSMVMDIGRRNIEAVRKKLKELSIPIVAEEVGGNKGRTMTLDTSNGIVQIKTVGVGMKEI</sequence>
<protein>
    <recommendedName>
        <fullName evidence="1">Probable chemoreceptor glutamine deamidase CheD</fullName>
        <ecNumber evidence="1">3.5.1.44</ecNumber>
    </recommendedName>
</protein>
<organism>
    <name type="scientific">Clostridium tetani (strain Massachusetts / E88)</name>
    <dbReference type="NCBI Taxonomy" id="212717"/>
    <lineage>
        <taxon>Bacteria</taxon>
        <taxon>Bacillati</taxon>
        <taxon>Bacillota</taxon>
        <taxon>Clostridia</taxon>
        <taxon>Eubacteriales</taxon>
        <taxon>Clostridiaceae</taxon>
        <taxon>Clostridium</taxon>
    </lineage>
</organism>
<accession>Q893S5</accession>
<evidence type="ECO:0000255" key="1">
    <source>
        <dbReference type="HAMAP-Rule" id="MF_01440"/>
    </source>
</evidence>
<feature type="chain" id="PRO_0000251025" description="Probable chemoreceptor glutamine deamidase CheD">
    <location>
        <begin position="1"/>
        <end position="165"/>
    </location>
</feature>
<dbReference type="EC" id="3.5.1.44" evidence="1"/>
<dbReference type="EMBL" id="AE015927">
    <property type="protein sequence ID" value="AAO36267.1"/>
    <property type="molecule type" value="Genomic_DNA"/>
</dbReference>
<dbReference type="SMR" id="Q893S5"/>
<dbReference type="STRING" id="212717.CTC_01734"/>
<dbReference type="KEGG" id="ctc:CTC_01734"/>
<dbReference type="HOGENOM" id="CLU_087854_2_0_9"/>
<dbReference type="Proteomes" id="UP000001412">
    <property type="component" value="Chromosome"/>
</dbReference>
<dbReference type="GO" id="GO:0050568">
    <property type="term" value="F:protein-glutamine glutaminase activity"/>
    <property type="evidence" value="ECO:0007669"/>
    <property type="project" value="UniProtKB-UniRule"/>
</dbReference>
<dbReference type="GO" id="GO:0006935">
    <property type="term" value="P:chemotaxis"/>
    <property type="evidence" value="ECO:0007669"/>
    <property type="project" value="UniProtKB-UniRule"/>
</dbReference>
<dbReference type="CDD" id="cd16352">
    <property type="entry name" value="CheD"/>
    <property type="match status" value="1"/>
</dbReference>
<dbReference type="Gene3D" id="3.30.1330.200">
    <property type="match status" value="1"/>
</dbReference>
<dbReference type="HAMAP" id="MF_01440">
    <property type="entry name" value="CheD"/>
    <property type="match status" value="1"/>
</dbReference>
<dbReference type="InterPro" id="IPR038592">
    <property type="entry name" value="CheD-like_sf"/>
</dbReference>
<dbReference type="InterPro" id="IPR005659">
    <property type="entry name" value="Chemorcpt_Glu_NH3ase_CheD"/>
</dbReference>
<dbReference type="InterPro" id="IPR011324">
    <property type="entry name" value="Cytotoxic_necrot_fac-like_cat"/>
</dbReference>
<dbReference type="NCBIfam" id="NF010015">
    <property type="entry name" value="PRK13490.1"/>
    <property type="match status" value="1"/>
</dbReference>
<dbReference type="PANTHER" id="PTHR35147">
    <property type="entry name" value="CHEMORECEPTOR GLUTAMINE DEAMIDASE CHED-RELATED"/>
    <property type="match status" value="1"/>
</dbReference>
<dbReference type="PANTHER" id="PTHR35147:SF1">
    <property type="entry name" value="CHEMORECEPTOR GLUTAMINE DEAMIDASE CHED-RELATED"/>
    <property type="match status" value="1"/>
</dbReference>
<dbReference type="Pfam" id="PF03975">
    <property type="entry name" value="CheD"/>
    <property type="match status" value="1"/>
</dbReference>
<dbReference type="SUPFAM" id="SSF64438">
    <property type="entry name" value="CNF1/YfiH-like putative cysteine hydrolases"/>
    <property type="match status" value="1"/>
</dbReference>